<name>KGUA_BORPA</name>
<protein>
    <recommendedName>
        <fullName evidence="1">Guanylate kinase</fullName>
        <ecNumber evidence="1">2.7.4.8</ecNumber>
    </recommendedName>
    <alternativeName>
        <fullName evidence="1">GMP kinase</fullName>
    </alternativeName>
</protein>
<organism>
    <name type="scientific">Bordetella parapertussis (strain 12822 / ATCC BAA-587 / NCTC 13253)</name>
    <dbReference type="NCBI Taxonomy" id="257311"/>
    <lineage>
        <taxon>Bacteria</taxon>
        <taxon>Pseudomonadati</taxon>
        <taxon>Pseudomonadota</taxon>
        <taxon>Betaproteobacteria</taxon>
        <taxon>Burkholderiales</taxon>
        <taxon>Alcaligenaceae</taxon>
        <taxon>Bordetella</taxon>
    </lineage>
</organism>
<dbReference type="EC" id="2.7.4.8" evidence="1"/>
<dbReference type="EMBL" id="BX640432">
    <property type="protein sequence ID" value="CAE38295.1"/>
    <property type="molecule type" value="Genomic_DNA"/>
</dbReference>
<dbReference type="SMR" id="Q7W6B2"/>
<dbReference type="KEGG" id="bpa:BPP3005"/>
<dbReference type="HOGENOM" id="CLU_001715_1_0_4"/>
<dbReference type="Proteomes" id="UP000001421">
    <property type="component" value="Chromosome"/>
</dbReference>
<dbReference type="GO" id="GO:0005829">
    <property type="term" value="C:cytosol"/>
    <property type="evidence" value="ECO:0007669"/>
    <property type="project" value="TreeGrafter"/>
</dbReference>
<dbReference type="GO" id="GO:0005524">
    <property type="term" value="F:ATP binding"/>
    <property type="evidence" value="ECO:0007669"/>
    <property type="project" value="UniProtKB-UniRule"/>
</dbReference>
<dbReference type="GO" id="GO:0004385">
    <property type="term" value="F:guanylate kinase activity"/>
    <property type="evidence" value="ECO:0007669"/>
    <property type="project" value="UniProtKB-UniRule"/>
</dbReference>
<dbReference type="CDD" id="cd00071">
    <property type="entry name" value="GMPK"/>
    <property type="match status" value="1"/>
</dbReference>
<dbReference type="FunFam" id="3.30.63.10:FF:000005">
    <property type="entry name" value="Guanylate kinase"/>
    <property type="match status" value="1"/>
</dbReference>
<dbReference type="Gene3D" id="3.30.63.10">
    <property type="entry name" value="Guanylate Kinase phosphate binding domain"/>
    <property type="match status" value="1"/>
</dbReference>
<dbReference type="Gene3D" id="3.40.50.300">
    <property type="entry name" value="P-loop containing nucleotide triphosphate hydrolases"/>
    <property type="match status" value="1"/>
</dbReference>
<dbReference type="HAMAP" id="MF_00328">
    <property type="entry name" value="Guanylate_kinase"/>
    <property type="match status" value="1"/>
</dbReference>
<dbReference type="InterPro" id="IPR008145">
    <property type="entry name" value="GK/Ca_channel_bsu"/>
</dbReference>
<dbReference type="InterPro" id="IPR008144">
    <property type="entry name" value="Guanylate_kin-like_dom"/>
</dbReference>
<dbReference type="InterPro" id="IPR017665">
    <property type="entry name" value="Guanylate_kinase"/>
</dbReference>
<dbReference type="InterPro" id="IPR020590">
    <property type="entry name" value="Guanylate_kinase_CS"/>
</dbReference>
<dbReference type="InterPro" id="IPR027417">
    <property type="entry name" value="P-loop_NTPase"/>
</dbReference>
<dbReference type="NCBIfam" id="TIGR03263">
    <property type="entry name" value="guanyl_kin"/>
    <property type="match status" value="1"/>
</dbReference>
<dbReference type="PANTHER" id="PTHR23117:SF13">
    <property type="entry name" value="GUANYLATE KINASE"/>
    <property type="match status" value="1"/>
</dbReference>
<dbReference type="PANTHER" id="PTHR23117">
    <property type="entry name" value="GUANYLATE KINASE-RELATED"/>
    <property type="match status" value="1"/>
</dbReference>
<dbReference type="Pfam" id="PF00625">
    <property type="entry name" value="Guanylate_kin"/>
    <property type="match status" value="1"/>
</dbReference>
<dbReference type="SMART" id="SM00072">
    <property type="entry name" value="GuKc"/>
    <property type="match status" value="1"/>
</dbReference>
<dbReference type="SUPFAM" id="SSF52540">
    <property type="entry name" value="P-loop containing nucleoside triphosphate hydrolases"/>
    <property type="match status" value="1"/>
</dbReference>
<dbReference type="PROSITE" id="PS00856">
    <property type="entry name" value="GUANYLATE_KINASE_1"/>
    <property type="match status" value="1"/>
</dbReference>
<dbReference type="PROSITE" id="PS50052">
    <property type="entry name" value="GUANYLATE_KINASE_2"/>
    <property type="match status" value="1"/>
</dbReference>
<comment type="function">
    <text evidence="1">Essential for recycling GMP and indirectly, cGMP.</text>
</comment>
<comment type="catalytic activity">
    <reaction evidence="1">
        <text>GMP + ATP = GDP + ADP</text>
        <dbReference type="Rhea" id="RHEA:20780"/>
        <dbReference type="ChEBI" id="CHEBI:30616"/>
        <dbReference type="ChEBI" id="CHEBI:58115"/>
        <dbReference type="ChEBI" id="CHEBI:58189"/>
        <dbReference type="ChEBI" id="CHEBI:456216"/>
        <dbReference type="EC" id="2.7.4.8"/>
    </reaction>
</comment>
<comment type="subcellular location">
    <subcellularLocation>
        <location evidence="1">Cytoplasm</location>
    </subcellularLocation>
</comment>
<comment type="similarity">
    <text evidence="1">Belongs to the guanylate kinase family.</text>
</comment>
<sequence>MSFLSMSAPSGNVFMVVAPSGAGKSSLVRALLDRDPSLVLSISCTTRAPRPGEQDGREYRFVDQAEFARLRDAQQLLEWAEVHGNFYGTPRDRIDEATRAGHDVLLEIDWQGARQVKQRYPEAIGIFVLPPSIDELESRLKARGQDAPQVIARRLLAAGGEIAHAPECEYVIINQEFSVALTELVQIISAARLRFSSQAVRNAQLFSQLGIPAAH</sequence>
<keyword id="KW-0067">ATP-binding</keyword>
<keyword id="KW-0963">Cytoplasm</keyword>
<keyword id="KW-0418">Kinase</keyword>
<keyword id="KW-0547">Nucleotide-binding</keyword>
<keyword id="KW-0808">Transferase</keyword>
<accession>Q7W6B2</accession>
<feature type="chain" id="PRO_0000170505" description="Guanylate kinase">
    <location>
        <begin position="1"/>
        <end position="215"/>
    </location>
</feature>
<feature type="domain" description="Guanylate kinase-like" evidence="1">
    <location>
        <begin position="11"/>
        <end position="189"/>
    </location>
</feature>
<feature type="binding site" evidence="1">
    <location>
        <begin position="18"/>
        <end position="25"/>
    </location>
    <ligand>
        <name>ATP</name>
        <dbReference type="ChEBI" id="CHEBI:30616"/>
    </ligand>
</feature>
<reference key="1">
    <citation type="journal article" date="2003" name="Nat. Genet.">
        <title>Comparative analysis of the genome sequences of Bordetella pertussis, Bordetella parapertussis and Bordetella bronchiseptica.</title>
        <authorList>
            <person name="Parkhill J."/>
            <person name="Sebaihia M."/>
            <person name="Preston A."/>
            <person name="Murphy L.D."/>
            <person name="Thomson N.R."/>
            <person name="Harris D.E."/>
            <person name="Holden M.T.G."/>
            <person name="Churcher C.M."/>
            <person name="Bentley S.D."/>
            <person name="Mungall K.L."/>
            <person name="Cerdeno-Tarraga A.-M."/>
            <person name="Temple L."/>
            <person name="James K.D."/>
            <person name="Harris B."/>
            <person name="Quail M.A."/>
            <person name="Achtman M."/>
            <person name="Atkin R."/>
            <person name="Baker S."/>
            <person name="Basham D."/>
            <person name="Bason N."/>
            <person name="Cherevach I."/>
            <person name="Chillingworth T."/>
            <person name="Collins M."/>
            <person name="Cronin A."/>
            <person name="Davis P."/>
            <person name="Doggett J."/>
            <person name="Feltwell T."/>
            <person name="Goble A."/>
            <person name="Hamlin N."/>
            <person name="Hauser H."/>
            <person name="Holroyd S."/>
            <person name="Jagels K."/>
            <person name="Leather S."/>
            <person name="Moule S."/>
            <person name="Norberczak H."/>
            <person name="O'Neil S."/>
            <person name="Ormond D."/>
            <person name="Price C."/>
            <person name="Rabbinowitsch E."/>
            <person name="Rutter S."/>
            <person name="Sanders M."/>
            <person name="Saunders D."/>
            <person name="Seeger K."/>
            <person name="Sharp S."/>
            <person name="Simmonds M."/>
            <person name="Skelton J."/>
            <person name="Squares R."/>
            <person name="Squares S."/>
            <person name="Stevens K."/>
            <person name="Unwin L."/>
            <person name="Whitehead S."/>
            <person name="Barrell B.G."/>
            <person name="Maskell D.J."/>
        </authorList>
    </citation>
    <scope>NUCLEOTIDE SEQUENCE [LARGE SCALE GENOMIC DNA]</scope>
    <source>
        <strain>12822 / ATCC BAA-587 / NCTC 13253</strain>
    </source>
</reference>
<gene>
    <name evidence="1" type="primary">gmk</name>
    <name type="ordered locus">BPP3005</name>
</gene>
<evidence type="ECO:0000255" key="1">
    <source>
        <dbReference type="HAMAP-Rule" id="MF_00328"/>
    </source>
</evidence>
<proteinExistence type="inferred from homology"/>